<protein>
    <recommendedName>
        <fullName evidence="1">Adenylate kinase</fullName>
        <shortName evidence="1">AK</shortName>
        <ecNumber evidence="1">2.7.4.3</ecNumber>
    </recommendedName>
    <alternativeName>
        <fullName evidence="1">ATP-AMP transphosphorylase</fullName>
    </alternativeName>
    <alternativeName>
        <fullName evidence="1">ATP:AMP phosphotransferase</fullName>
    </alternativeName>
    <alternativeName>
        <fullName evidence="1">Adenylate monophosphate kinase</fullName>
    </alternativeName>
</protein>
<organism>
    <name type="scientific">Photobacterium profundum (strain SS9)</name>
    <dbReference type="NCBI Taxonomy" id="298386"/>
    <lineage>
        <taxon>Bacteria</taxon>
        <taxon>Pseudomonadati</taxon>
        <taxon>Pseudomonadota</taxon>
        <taxon>Gammaproteobacteria</taxon>
        <taxon>Vibrionales</taxon>
        <taxon>Vibrionaceae</taxon>
        <taxon>Photobacterium</taxon>
    </lineage>
</organism>
<comment type="function">
    <text evidence="1">Catalyzes the reversible transfer of the terminal phosphate group between ATP and AMP. Plays an important role in cellular energy homeostasis and in adenine nucleotide metabolism.</text>
</comment>
<comment type="catalytic activity">
    <reaction evidence="1">
        <text>AMP + ATP = 2 ADP</text>
        <dbReference type="Rhea" id="RHEA:12973"/>
        <dbReference type="ChEBI" id="CHEBI:30616"/>
        <dbReference type="ChEBI" id="CHEBI:456215"/>
        <dbReference type="ChEBI" id="CHEBI:456216"/>
        <dbReference type="EC" id="2.7.4.3"/>
    </reaction>
</comment>
<comment type="pathway">
    <text evidence="1">Purine metabolism; AMP biosynthesis via salvage pathway; AMP from ADP: step 1/1.</text>
</comment>
<comment type="subunit">
    <text evidence="1">Monomer.</text>
</comment>
<comment type="subcellular location">
    <subcellularLocation>
        <location evidence="1">Cytoplasm</location>
    </subcellularLocation>
</comment>
<comment type="domain">
    <text evidence="1">Consists of three domains, a large central CORE domain and two small peripheral domains, NMPbind and LID, which undergo movements during catalysis. The LID domain closes over the site of phosphoryl transfer upon ATP binding. Assembling and dissambling the active center during each catalytic cycle provides an effective means to prevent ATP hydrolysis.</text>
</comment>
<comment type="similarity">
    <text evidence="1">Belongs to the adenylate kinase family.</text>
</comment>
<proteinExistence type="evidence at protein level"/>
<feature type="chain" id="PRO_0000158824" description="Adenylate kinase">
    <location>
        <begin position="1"/>
        <end position="214"/>
    </location>
</feature>
<feature type="region of interest" description="NMP" evidence="1">
    <location>
        <begin position="30"/>
        <end position="59"/>
    </location>
</feature>
<feature type="region of interest" description="LID" evidence="1">
    <location>
        <begin position="122"/>
        <end position="159"/>
    </location>
</feature>
<feature type="binding site" evidence="1">
    <location>
        <begin position="10"/>
        <end position="15"/>
    </location>
    <ligand>
        <name>ATP</name>
        <dbReference type="ChEBI" id="CHEBI:30616"/>
    </ligand>
</feature>
<feature type="binding site" evidence="1">
    <location>
        <position position="31"/>
    </location>
    <ligand>
        <name>AMP</name>
        <dbReference type="ChEBI" id="CHEBI:456215"/>
    </ligand>
</feature>
<feature type="binding site" evidence="1">
    <location>
        <position position="36"/>
    </location>
    <ligand>
        <name>AMP</name>
        <dbReference type="ChEBI" id="CHEBI:456215"/>
    </ligand>
</feature>
<feature type="binding site" evidence="1">
    <location>
        <begin position="57"/>
        <end position="59"/>
    </location>
    <ligand>
        <name>AMP</name>
        <dbReference type="ChEBI" id="CHEBI:456215"/>
    </ligand>
</feature>
<feature type="binding site" evidence="1">
    <location>
        <begin position="85"/>
        <end position="88"/>
    </location>
    <ligand>
        <name>AMP</name>
        <dbReference type="ChEBI" id="CHEBI:456215"/>
    </ligand>
</feature>
<feature type="binding site" evidence="1">
    <location>
        <position position="92"/>
    </location>
    <ligand>
        <name>AMP</name>
        <dbReference type="ChEBI" id="CHEBI:456215"/>
    </ligand>
</feature>
<feature type="binding site" evidence="1">
    <location>
        <position position="123"/>
    </location>
    <ligand>
        <name>ATP</name>
        <dbReference type="ChEBI" id="CHEBI:30616"/>
    </ligand>
</feature>
<feature type="binding site" evidence="1">
    <location>
        <begin position="132"/>
        <end position="133"/>
    </location>
    <ligand>
        <name>ATP</name>
        <dbReference type="ChEBI" id="CHEBI:30616"/>
    </ligand>
</feature>
<feature type="binding site" evidence="1">
    <location>
        <position position="156"/>
    </location>
    <ligand>
        <name>AMP</name>
        <dbReference type="ChEBI" id="CHEBI:456215"/>
    </ligand>
</feature>
<feature type="binding site" evidence="1">
    <location>
        <position position="167"/>
    </location>
    <ligand>
        <name>AMP</name>
        <dbReference type="ChEBI" id="CHEBI:456215"/>
    </ligand>
</feature>
<feature type="binding site" evidence="1">
    <location>
        <position position="200"/>
    </location>
    <ligand>
        <name>ATP</name>
        <dbReference type="ChEBI" id="CHEBI:30616"/>
    </ligand>
</feature>
<feature type="strand" evidence="2">
    <location>
        <begin position="2"/>
        <end position="6"/>
    </location>
</feature>
<feature type="helix" evidence="2">
    <location>
        <begin position="13"/>
        <end position="24"/>
    </location>
</feature>
<feature type="strand" evidence="2">
    <location>
        <begin position="28"/>
        <end position="30"/>
    </location>
</feature>
<feature type="helix" evidence="2">
    <location>
        <begin position="31"/>
        <end position="41"/>
    </location>
</feature>
<feature type="helix" evidence="2">
    <location>
        <begin position="44"/>
        <end position="55"/>
    </location>
</feature>
<feature type="helix" evidence="2">
    <location>
        <begin position="61"/>
        <end position="72"/>
    </location>
</feature>
<feature type="helix" evidence="2">
    <location>
        <begin position="75"/>
        <end position="77"/>
    </location>
</feature>
<feature type="strand" evidence="2">
    <location>
        <begin position="81"/>
        <end position="85"/>
    </location>
</feature>
<feature type="helix" evidence="2">
    <location>
        <begin position="90"/>
        <end position="98"/>
    </location>
</feature>
<feature type="strand" evidence="2">
    <location>
        <begin position="104"/>
        <end position="110"/>
    </location>
</feature>
<feature type="helix" evidence="2">
    <location>
        <begin position="113"/>
        <end position="120"/>
    </location>
</feature>
<feature type="strand" evidence="2">
    <location>
        <begin position="123"/>
        <end position="126"/>
    </location>
</feature>
<feature type="turn" evidence="2">
    <location>
        <begin position="127"/>
        <end position="130"/>
    </location>
</feature>
<feature type="strand" evidence="2">
    <location>
        <begin position="131"/>
        <end position="134"/>
    </location>
</feature>
<feature type="turn" evidence="2">
    <location>
        <begin position="135"/>
        <end position="137"/>
    </location>
</feature>
<feature type="turn" evidence="2">
    <location>
        <begin position="147"/>
        <end position="149"/>
    </location>
</feature>
<feature type="helix" evidence="2">
    <location>
        <begin position="157"/>
        <end position="159"/>
    </location>
</feature>
<feature type="helix" evidence="2">
    <location>
        <begin position="161"/>
        <end position="174"/>
    </location>
</feature>
<feature type="helix" evidence="2">
    <location>
        <begin position="177"/>
        <end position="187"/>
    </location>
</feature>
<feature type="strand" evidence="2">
    <location>
        <begin position="190"/>
        <end position="197"/>
    </location>
</feature>
<feature type="helix" evidence="2">
    <location>
        <begin position="202"/>
        <end position="212"/>
    </location>
</feature>
<evidence type="ECO:0000255" key="1">
    <source>
        <dbReference type="HAMAP-Rule" id="MF_00235"/>
    </source>
</evidence>
<evidence type="ECO:0007829" key="2">
    <source>
        <dbReference type="PDB" id="4K46"/>
    </source>
</evidence>
<name>KAD_PHOPR</name>
<sequence length="214" mass="23004">MRIILLGAPGAGKGTQAQFIMAKFGIPQISTGDMLRAAIKAGTELGKQAKSVIDAGQLVSDDIILGLVKERIAQDDCAKGFLLDGFPRTIPQADGLKEVGVVVDYVIEFDVADSVIVERMAGRRAHLASGRTYHNVYNPPKVEGKDDVTGEDLVIREDDKEETVLARLGVYHNQTAPLIAYYGKEAEAGNTQYLKFDGTKAVAEVSAELEKALA</sequence>
<gene>
    <name evidence="1" type="primary">adk</name>
    <name type="ordered locus">PBPRA1024</name>
</gene>
<dbReference type="EC" id="2.7.4.3" evidence="1"/>
<dbReference type="EMBL" id="CR378666">
    <property type="protein sequence ID" value="CAG19435.1"/>
    <property type="molecule type" value="Genomic_DNA"/>
</dbReference>
<dbReference type="RefSeq" id="WP_011217769.1">
    <property type="nucleotide sequence ID" value="NC_006370.1"/>
</dbReference>
<dbReference type="PDB" id="4K46">
    <property type="method" value="X-ray"/>
    <property type="resolution" value="2.01 A"/>
    <property type="chains" value="A=1-214"/>
</dbReference>
<dbReference type="PDBsum" id="4K46"/>
<dbReference type="SMR" id="Q6LTE1"/>
<dbReference type="STRING" id="298386.PBPRA1024"/>
<dbReference type="KEGG" id="ppr:PBPRA1024"/>
<dbReference type="eggNOG" id="COG0563">
    <property type="taxonomic scope" value="Bacteria"/>
</dbReference>
<dbReference type="HOGENOM" id="CLU_032354_1_2_6"/>
<dbReference type="UniPathway" id="UPA00588">
    <property type="reaction ID" value="UER00649"/>
</dbReference>
<dbReference type="EvolutionaryTrace" id="Q6LTE1"/>
<dbReference type="Proteomes" id="UP000000593">
    <property type="component" value="Chromosome 1"/>
</dbReference>
<dbReference type="GO" id="GO:0005737">
    <property type="term" value="C:cytoplasm"/>
    <property type="evidence" value="ECO:0007669"/>
    <property type="project" value="UniProtKB-SubCell"/>
</dbReference>
<dbReference type="GO" id="GO:0004017">
    <property type="term" value="F:adenylate kinase activity"/>
    <property type="evidence" value="ECO:0007669"/>
    <property type="project" value="UniProtKB-UniRule"/>
</dbReference>
<dbReference type="GO" id="GO:0005524">
    <property type="term" value="F:ATP binding"/>
    <property type="evidence" value="ECO:0007669"/>
    <property type="project" value="UniProtKB-UniRule"/>
</dbReference>
<dbReference type="GO" id="GO:0044209">
    <property type="term" value="P:AMP salvage"/>
    <property type="evidence" value="ECO:0007669"/>
    <property type="project" value="UniProtKB-UniRule"/>
</dbReference>
<dbReference type="CDD" id="cd01428">
    <property type="entry name" value="ADK"/>
    <property type="match status" value="1"/>
</dbReference>
<dbReference type="FunFam" id="3.40.50.300:FF:000106">
    <property type="entry name" value="Adenylate kinase mitochondrial"/>
    <property type="match status" value="1"/>
</dbReference>
<dbReference type="Gene3D" id="3.40.50.300">
    <property type="entry name" value="P-loop containing nucleotide triphosphate hydrolases"/>
    <property type="match status" value="1"/>
</dbReference>
<dbReference type="HAMAP" id="MF_00235">
    <property type="entry name" value="Adenylate_kinase_Adk"/>
    <property type="match status" value="1"/>
</dbReference>
<dbReference type="InterPro" id="IPR006259">
    <property type="entry name" value="Adenyl_kin_sub"/>
</dbReference>
<dbReference type="InterPro" id="IPR000850">
    <property type="entry name" value="Adenylat/UMP-CMP_kin"/>
</dbReference>
<dbReference type="InterPro" id="IPR033690">
    <property type="entry name" value="Adenylat_kinase_CS"/>
</dbReference>
<dbReference type="InterPro" id="IPR007862">
    <property type="entry name" value="Adenylate_kinase_lid-dom"/>
</dbReference>
<dbReference type="InterPro" id="IPR027417">
    <property type="entry name" value="P-loop_NTPase"/>
</dbReference>
<dbReference type="NCBIfam" id="TIGR01351">
    <property type="entry name" value="adk"/>
    <property type="match status" value="1"/>
</dbReference>
<dbReference type="NCBIfam" id="NF001379">
    <property type="entry name" value="PRK00279.1-1"/>
    <property type="match status" value="1"/>
</dbReference>
<dbReference type="NCBIfam" id="NF001380">
    <property type="entry name" value="PRK00279.1-2"/>
    <property type="match status" value="1"/>
</dbReference>
<dbReference type="NCBIfam" id="NF001381">
    <property type="entry name" value="PRK00279.1-3"/>
    <property type="match status" value="1"/>
</dbReference>
<dbReference type="PANTHER" id="PTHR23359">
    <property type="entry name" value="NUCLEOTIDE KINASE"/>
    <property type="match status" value="1"/>
</dbReference>
<dbReference type="Pfam" id="PF00406">
    <property type="entry name" value="ADK"/>
    <property type="match status" value="1"/>
</dbReference>
<dbReference type="Pfam" id="PF05191">
    <property type="entry name" value="ADK_lid"/>
    <property type="match status" value="1"/>
</dbReference>
<dbReference type="PRINTS" id="PR00094">
    <property type="entry name" value="ADENYLTKNASE"/>
</dbReference>
<dbReference type="SUPFAM" id="SSF52540">
    <property type="entry name" value="P-loop containing nucleoside triphosphate hydrolases"/>
    <property type="match status" value="1"/>
</dbReference>
<dbReference type="PROSITE" id="PS00113">
    <property type="entry name" value="ADENYLATE_KINASE"/>
    <property type="match status" value="1"/>
</dbReference>
<reference key="1">
    <citation type="journal article" date="2005" name="Science">
        <title>Life at depth: Photobacterium profundum genome sequence and expression analysis.</title>
        <authorList>
            <person name="Vezzi A."/>
            <person name="Campanaro S."/>
            <person name="D'Angelo M."/>
            <person name="Simonato F."/>
            <person name="Vitulo N."/>
            <person name="Lauro F.M."/>
            <person name="Cestaro A."/>
            <person name="Malacrida G."/>
            <person name="Simionati B."/>
            <person name="Cannata N."/>
            <person name="Romualdi C."/>
            <person name="Bartlett D.H."/>
            <person name="Valle G."/>
        </authorList>
    </citation>
    <scope>NUCLEOTIDE SEQUENCE [LARGE SCALE GENOMIC DNA]</scope>
    <source>
        <strain>ATCC BAA-1253 / SS9</strain>
    </source>
</reference>
<accession>Q6LTE1</accession>
<keyword id="KW-0002">3D-structure</keyword>
<keyword id="KW-0067">ATP-binding</keyword>
<keyword id="KW-0963">Cytoplasm</keyword>
<keyword id="KW-0418">Kinase</keyword>
<keyword id="KW-0545">Nucleotide biosynthesis</keyword>
<keyword id="KW-0547">Nucleotide-binding</keyword>
<keyword id="KW-1185">Reference proteome</keyword>
<keyword id="KW-0808">Transferase</keyword>